<comment type="function">
    <text>Transcriptional activator which binds specifically to the MEF2 element, 5'-YTA[AT](4)TAR-3', found in numerous muscle-specific genes. Mediates cellular functions in skeletal and cardiac muscle development,.</text>
</comment>
<comment type="subunit">
    <text evidence="1">Binds DNA as a homo- or heterodimer.</text>
</comment>
<comment type="subcellular location">
    <subcellularLocation>
        <location evidence="3">Nucleus</location>
    </subcellularLocation>
</comment>
<comment type="tissue specificity">
    <text>Expressed in both embryonic and adult tissues with high expression in heart and skeletal muscle. Also expressed in gut, lung and brain of 15 dpc embryos and adults.</text>
</comment>
<comment type="developmental stage">
    <text evidence="5">First expressed in stage 8 embryos in the precardiac region and the expression continues during the development of the cardiac tube. Later expression in the atrium and ventricle. From stage 13, expressed in somites. Expression here is limited to the myotome and is not found in newly formed somites until the muscle-specific transcription factors MyoD and myogenin are present.</text>
</comment>
<comment type="PTM">
    <text evidence="1">Sumoylation on Lys-402 is enhanced by PIAS1 and represses transcriptional activity. Has no effect on nuclear location nor on DNA binding. Sumoylated by SUMO1 and, to a lesser extent by SUMO2 and SUMO3 (By similarity).</text>
</comment>
<comment type="PTM">
    <text evidence="1">Acetylation on Lys-402 activates transcriptional activity.</text>
</comment>
<gene>
    <name type="primary">MEF2A</name>
</gene>
<name>MEF2A_CHICK</name>
<dbReference type="EMBL" id="AJ010072">
    <property type="protein sequence ID" value="CAB43712.1"/>
    <property type="molecule type" value="mRNA"/>
</dbReference>
<dbReference type="SMR" id="Q9W6U8"/>
<dbReference type="FunCoup" id="Q9W6U8">
    <property type="interactions" value="2120"/>
</dbReference>
<dbReference type="STRING" id="9031.ENSGALP00000071199"/>
<dbReference type="PaxDb" id="9031-ENSGALP00000011486"/>
<dbReference type="VEuPathDB" id="HostDB:geneid_395670"/>
<dbReference type="eggNOG" id="KOG0014">
    <property type="taxonomic scope" value="Eukaryota"/>
</dbReference>
<dbReference type="InParanoid" id="Q9W6U8"/>
<dbReference type="OrthoDB" id="1898716at2759"/>
<dbReference type="PhylomeDB" id="Q9W6U8"/>
<dbReference type="PRO" id="PR:Q9W6U8"/>
<dbReference type="Proteomes" id="UP000000539">
    <property type="component" value="Unassembled WGS sequence"/>
</dbReference>
<dbReference type="GO" id="GO:0005634">
    <property type="term" value="C:nucleus"/>
    <property type="evidence" value="ECO:0007669"/>
    <property type="project" value="UniProtKB-SubCell"/>
</dbReference>
<dbReference type="GO" id="GO:0003682">
    <property type="term" value="F:chromatin binding"/>
    <property type="evidence" value="ECO:0000250"/>
    <property type="project" value="UniProtKB"/>
</dbReference>
<dbReference type="GO" id="GO:0000981">
    <property type="term" value="F:DNA-binding transcription factor activity, RNA polymerase II-specific"/>
    <property type="evidence" value="ECO:0000318"/>
    <property type="project" value="GO_Central"/>
</dbReference>
<dbReference type="GO" id="GO:0046983">
    <property type="term" value="F:protein dimerization activity"/>
    <property type="evidence" value="ECO:0007669"/>
    <property type="project" value="InterPro"/>
</dbReference>
<dbReference type="GO" id="GO:0000978">
    <property type="term" value="F:RNA polymerase II cis-regulatory region sequence-specific DNA binding"/>
    <property type="evidence" value="ECO:0000318"/>
    <property type="project" value="GO_Central"/>
</dbReference>
<dbReference type="GO" id="GO:0006915">
    <property type="term" value="P:apoptotic process"/>
    <property type="evidence" value="ECO:0007669"/>
    <property type="project" value="UniProtKB-KW"/>
</dbReference>
<dbReference type="GO" id="GO:0030154">
    <property type="term" value="P:cell differentiation"/>
    <property type="evidence" value="ECO:0007669"/>
    <property type="project" value="UniProtKB-KW"/>
</dbReference>
<dbReference type="GO" id="GO:0007507">
    <property type="term" value="P:heart development"/>
    <property type="evidence" value="ECO:0007669"/>
    <property type="project" value="UniProtKB-ARBA"/>
</dbReference>
<dbReference type="GO" id="GO:0007399">
    <property type="term" value="P:nervous system development"/>
    <property type="evidence" value="ECO:0007669"/>
    <property type="project" value="UniProtKB-KW"/>
</dbReference>
<dbReference type="GO" id="GO:0045944">
    <property type="term" value="P:positive regulation of transcription by RNA polymerase II"/>
    <property type="evidence" value="ECO:0000250"/>
    <property type="project" value="UniProtKB"/>
</dbReference>
<dbReference type="CDD" id="cd00265">
    <property type="entry name" value="MADS_MEF2_like"/>
    <property type="match status" value="1"/>
</dbReference>
<dbReference type="FunFam" id="3.40.1810.10:FF:000001">
    <property type="entry name" value="Myocyte-specific enhancer factor 2A homolog"/>
    <property type="match status" value="1"/>
</dbReference>
<dbReference type="Gene3D" id="3.40.1810.10">
    <property type="entry name" value="Transcription factor, MADS-box"/>
    <property type="match status" value="1"/>
</dbReference>
<dbReference type="InterPro" id="IPR022102">
    <property type="entry name" value="HJURP_C"/>
</dbReference>
<dbReference type="InterPro" id="IPR033896">
    <property type="entry name" value="MEF2-like_N"/>
</dbReference>
<dbReference type="InterPro" id="IPR002100">
    <property type="entry name" value="TF_MADSbox"/>
</dbReference>
<dbReference type="InterPro" id="IPR036879">
    <property type="entry name" value="TF_MADSbox_sf"/>
</dbReference>
<dbReference type="PANTHER" id="PTHR11945">
    <property type="entry name" value="MADS BOX PROTEIN"/>
    <property type="match status" value="1"/>
</dbReference>
<dbReference type="PANTHER" id="PTHR11945:SF534">
    <property type="entry name" value="MYOCYTE-SPECIFIC ENHANCER FACTOR 2"/>
    <property type="match status" value="1"/>
</dbReference>
<dbReference type="Pfam" id="PF12347">
    <property type="entry name" value="HJURP_C"/>
    <property type="match status" value="1"/>
</dbReference>
<dbReference type="Pfam" id="PF00319">
    <property type="entry name" value="SRF-TF"/>
    <property type="match status" value="1"/>
</dbReference>
<dbReference type="PRINTS" id="PR00404">
    <property type="entry name" value="MADSDOMAIN"/>
</dbReference>
<dbReference type="SMART" id="SM00432">
    <property type="entry name" value="MADS"/>
    <property type="match status" value="1"/>
</dbReference>
<dbReference type="SUPFAM" id="SSF55455">
    <property type="entry name" value="SRF-like"/>
    <property type="match status" value="1"/>
</dbReference>
<dbReference type="PROSITE" id="PS00350">
    <property type="entry name" value="MADS_BOX_1"/>
    <property type="match status" value="1"/>
</dbReference>
<dbReference type="PROSITE" id="PS50066">
    <property type="entry name" value="MADS_BOX_2"/>
    <property type="match status" value="1"/>
</dbReference>
<protein>
    <recommendedName>
        <fullName>Myocyte-specific enhancer factor 2A</fullName>
    </recommendedName>
</protein>
<proteinExistence type="evidence at transcript level"/>
<keyword id="KW-0007">Acetylation</keyword>
<keyword id="KW-0010">Activator</keyword>
<keyword id="KW-0053">Apoptosis</keyword>
<keyword id="KW-0217">Developmental protein</keyword>
<keyword id="KW-0221">Differentiation</keyword>
<keyword id="KW-0238">DNA-binding</keyword>
<keyword id="KW-1017">Isopeptide bond</keyword>
<keyword id="KW-0524">Neurogenesis</keyword>
<keyword id="KW-0539">Nucleus</keyword>
<keyword id="KW-0597">Phosphoprotein</keyword>
<keyword id="KW-1185">Reference proteome</keyword>
<keyword id="KW-0804">Transcription</keyword>
<keyword id="KW-0805">Transcription regulation</keyword>
<keyword id="KW-0832">Ubl conjugation</keyword>
<sequence length="499" mass="53669">MGRKKIQITRIMDERNRQVTFTKRKFGLMKKAYELSVLCDCEIALIIFNSSNKLFQYASTDMDKVLLKYTEYNEPHESRTNSDIVETLRKKGLNGCESPDADDYFEHSPLSEDRFSKLNEDSDFIFKRGPPGLPAQNFSMSVTVPVSNPNTLTYSNPGSSLVSPSLAASSSLTSTTMLSPPQTTLHRNVSPGAPQRPPSTGNAGGILGTTDLTVPNGAGTSPVGNGVWNSRASPSLLGTAGGGNGLGKVMPTKSPPPPGGGGLGMNNRKPDLRVVIPPSSKGMMPPLTEEDELELNTQRISSSQSTQPLATPVVSVTTPSFPPAGLVYSAMPTAYNTDYSLTSADLSAFEGFNSPGMLSLGQVSPWQQHHLGPATLSSLVSGSQLSQGSNLSINTNQNINIKSEPISPPRDRVNSSGFPQQQPPQQPQPPQPPQQPPQRQEMGRSPVDSLSSSSSSYDGSDREDPRSDFHSPVVLGRPPNSEDRESPSVKRMRMDTWVT</sequence>
<feature type="chain" id="PRO_0000366971" description="Myocyte-specific enhancer factor 2A">
    <location>
        <begin position="1"/>
        <end position="499"/>
    </location>
</feature>
<feature type="domain" description="MADS-box" evidence="3">
    <location>
        <begin position="3"/>
        <end position="57"/>
    </location>
</feature>
<feature type="DNA-binding region" description="Mef2-type" evidence="2">
    <location>
        <begin position="58"/>
        <end position="86"/>
    </location>
</feature>
<feature type="region of interest" description="Disordered" evidence="4">
    <location>
        <begin position="173"/>
        <end position="269"/>
    </location>
</feature>
<feature type="region of interest" description="Required for interaction with MAPKs" evidence="1">
    <location>
        <begin position="265"/>
        <end position="282"/>
    </location>
</feature>
<feature type="region of interest" description="Beta domain" evidence="1">
    <location>
        <begin position="288"/>
        <end position="295"/>
    </location>
</feature>
<feature type="region of interest" description="Disordered" evidence="4">
    <location>
        <begin position="380"/>
        <end position="499"/>
    </location>
</feature>
<feature type="compositionally biased region" description="Low complexity" evidence="4">
    <location>
        <begin position="173"/>
        <end position="185"/>
    </location>
</feature>
<feature type="compositionally biased region" description="Polar residues" evidence="4">
    <location>
        <begin position="210"/>
        <end position="233"/>
    </location>
</feature>
<feature type="compositionally biased region" description="Low complexity" evidence="4">
    <location>
        <begin position="380"/>
        <end position="392"/>
    </location>
</feature>
<feature type="compositionally biased region" description="Pro residues" evidence="4">
    <location>
        <begin position="421"/>
        <end position="436"/>
    </location>
</feature>
<feature type="compositionally biased region" description="Low complexity" evidence="4">
    <location>
        <begin position="445"/>
        <end position="458"/>
    </location>
</feature>
<feature type="compositionally biased region" description="Basic and acidic residues" evidence="4">
    <location>
        <begin position="459"/>
        <end position="469"/>
    </location>
</feature>
<feature type="compositionally biased region" description="Basic and acidic residues" evidence="4">
    <location>
        <begin position="480"/>
        <end position="499"/>
    </location>
</feature>
<feature type="modified residue" description="N6-acetyllysine" evidence="1">
    <location>
        <position position="4"/>
    </location>
</feature>
<feature type="modified residue" description="N6-acetyllysine" evidence="1">
    <location>
        <position position="117"/>
    </location>
</feature>
<feature type="modified residue" description="N6-acetyllysine" evidence="1">
    <location>
        <position position="248"/>
    </location>
</feature>
<feature type="modified residue" description="N6-acetyllysine" evidence="1">
    <location>
        <position position="253"/>
    </location>
</feature>
<feature type="modified residue" description="N6-acetyllysine" evidence="1">
    <location>
        <position position="269"/>
    </location>
</feature>
<feature type="modified residue" description="N6-acetyllysine" evidence="1">
    <location>
        <position position="281"/>
    </location>
</feature>
<feature type="modified residue" description="N6-acetyllysine; alternate" evidence="1">
    <location>
        <position position="402"/>
    </location>
</feature>
<feature type="cross-link" description="Glycyl lysine isopeptide (Lys-Gly) (interchain with G-Cter in SUMO); alternate" evidence="1">
    <location>
        <position position="402"/>
    </location>
</feature>
<accession>Q9W6U8</accession>
<reference key="1">
    <citation type="journal article" date="1999" name="Dev. Genes Evol.">
        <title>The MADS domain containing transcription factor cMef2a is expressed in heart and skeletal muscle during embryonic chick development.</title>
        <authorList>
            <person name="Buchberger A."/>
            <person name="Arnold H.-H."/>
        </authorList>
    </citation>
    <scope>NUCLEOTIDE SEQUENCE [MRNA]</scope>
    <scope>DEVELOPMENTAL STAGE</scope>
    <scope>TISSUE EXPRESSION</scope>
    <source>
        <tissue>Embryonic heart</tissue>
    </source>
</reference>
<organism>
    <name type="scientific">Gallus gallus</name>
    <name type="common">Chicken</name>
    <dbReference type="NCBI Taxonomy" id="9031"/>
    <lineage>
        <taxon>Eukaryota</taxon>
        <taxon>Metazoa</taxon>
        <taxon>Chordata</taxon>
        <taxon>Craniata</taxon>
        <taxon>Vertebrata</taxon>
        <taxon>Euteleostomi</taxon>
        <taxon>Archelosauria</taxon>
        <taxon>Archosauria</taxon>
        <taxon>Dinosauria</taxon>
        <taxon>Saurischia</taxon>
        <taxon>Theropoda</taxon>
        <taxon>Coelurosauria</taxon>
        <taxon>Aves</taxon>
        <taxon>Neognathae</taxon>
        <taxon>Galloanserae</taxon>
        <taxon>Galliformes</taxon>
        <taxon>Phasianidae</taxon>
        <taxon>Phasianinae</taxon>
        <taxon>Gallus</taxon>
    </lineage>
</organism>
<evidence type="ECO:0000250" key="1"/>
<evidence type="ECO:0000255" key="2"/>
<evidence type="ECO:0000255" key="3">
    <source>
        <dbReference type="PROSITE-ProRule" id="PRU00251"/>
    </source>
</evidence>
<evidence type="ECO:0000256" key="4">
    <source>
        <dbReference type="SAM" id="MobiDB-lite"/>
    </source>
</evidence>
<evidence type="ECO:0000269" key="5">
    <source>
    </source>
</evidence>